<sequence length="575" mass="66734">MQCRSIVHRLYSKVSHVTTPIFYPNAKPHLGHLYSSLLSDVYHRWQLFKGNLSFFTTGTDEHGLKIQCASESNGFDQPKKFVDKLYPEFVQLDKIYGINYTRFIRTTDPDHIENVMKLWELCLKNGYIYMGEHKGWYSISDETFYPESKVIKDPKNDGKYLNTESKNEVVYQSETNYFFRLSLFNKKIVDHIRKNPDFIFPASKRDQILKELETGGTLPDLSISRPSARLKWGIPTPNDPSQKVYVWFDALCNYLSSIGGIPSILSNATEVVSRHYSDKSNVKGQLLIPYPKEVQRNTIHVIGKDIAKFHTVYWPSFLLAAGLPLPRQIVVHGHWLCNGMKMSKSLGNVVDPIDMARYYGADIVRWFLLENSKLEEDGDFQEAKLYETRELLVSKWGNLINRCCGSKFNIERAVMKFSDKANFQFQEIFQNEPIVSERIENLAKLLNKSQEVFDEKIAIFQYPQLLRHVWSIINDANTLVQNSKPWERELDQQDNIIFLAMETSRILSILCQSIIPSLSQSFLDRIDVSKEKRTINYARLGSDKTYGKQSNKKGREVPLKKIPFRLQEEQTNMRS</sequence>
<dbReference type="EC" id="6.1.1.10" evidence="5"/>
<dbReference type="EMBL" id="X14629">
    <property type="protein sequence ID" value="CAA32778.1"/>
    <property type="molecule type" value="Genomic_DNA"/>
</dbReference>
<dbReference type="EMBL" id="Z72956">
    <property type="protein sequence ID" value="CAA97197.1"/>
    <property type="molecule type" value="Genomic_DNA"/>
</dbReference>
<dbReference type="EMBL" id="BK006941">
    <property type="protein sequence ID" value="DAA08266.1"/>
    <property type="molecule type" value="Genomic_DNA"/>
</dbReference>
<dbReference type="PIR" id="S64485">
    <property type="entry name" value="SYBYMM"/>
</dbReference>
<dbReference type="RefSeq" id="NP_011687.1">
    <property type="nucleotide sequence ID" value="NM_001181300.1"/>
</dbReference>
<dbReference type="SMR" id="P22438"/>
<dbReference type="BioGRID" id="33423">
    <property type="interactions" value="63"/>
</dbReference>
<dbReference type="FunCoup" id="P22438">
    <property type="interactions" value="638"/>
</dbReference>
<dbReference type="IntAct" id="P22438">
    <property type="interactions" value="3"/>
</dbReference>
<dbReference type="MINT" id="P22438"/>
<dbReference type="STRING" id="4932.YGR171C"/>
<dbReference type="PaxDb" id="4932-YGR171C"/>
<dbReference type="PeptideAtlas" id="P22438"/>
<dbReference type="EnsemblFungi" id="YGR171C_mRNA">
    <property type="protein sequence ID" value="YGR171C"/>
    <property type="gene ID" value="YGR171C"/>
</dbReference>
<dbReference type="GeneID" id="853081"/>
<dbReference type="KEGG" id="sce:YGR171C"/>
<dbReference type="AGR" id="SGD:S000003403"/>
<dbReference type="SGD" id="S000003403">
    <property type="gene designation" value="MSM1"/>
</dbReference>
<dbReference type="VEuPathDB" id="FungiDB:YGR171C"/>
<dbReference type="eggNOG" id="KOG0436">
    <property type="taxonomic scope" value="Eukaryota"/>
</dbReference>
<dbReference type="GeneTree" id="ENSGT00550000075136"/>
<dbReference type="HOGENOM" id="CLU_009710_9_0_1"/>
<dbReference type="InParanoid" id="P22438"/>
<dbReference type="OMA" id="MDTQAFC"/>
<dbReference type="OrthoDB" id="24670at2759"/>
<dbReference type="BioCyc" id="YEAST:G3O-30867-MONOMER"/>
<dbReference type="BioGRID-ORCS" id="853081">
    <property type="hits" value="2 hits in 10 CRISPR screens"/>
</dbReference>
<dbReference type="PRO" id="PR:P22438"/>
<dbReference type="Proteomes" id="UP000002311">
    <property type="component" value="Chromosome VII"/>
</dbReference>
<dbReference type="RNAct" id="P22438">
    <property type="molecule type" value="protein"/>
</dbReference>
<dbReference type="GO" id="GO:0005759">
    <property type="term" value="C:mitochondrial matrix"/>
    <property type="evidence" value="ECO:0007669"/>
    <property type="project" value="UniProtKB-SubCell"/>
</dbReference>
<dbReference type="GO" id="GO:0005739">
    <property type="term" value="C:mitochondrion"/>
    <property type="evidence" value="ECO:0000314"/>
    <property type="project" value="SGD"/>
</dbReference>
<dbReference type="GO" id="GO:0005524">
    <property type="term" value="F:ATP binding"/>
    <property type="evidence" value="ECO:0007669"/>
    <property type="project" value="UniProtKB-KW"/>
</dbReference>
<dbReference type="GO" id="GO:0004825">
    <property type="term" value="F:methionine-tRNA ligase activity"/>
    <property type="evidence" value="ECO:0000315"/>
    <property type="project" value="SGD"/>
</dbReference>
<dbReference type="GO" id="GO:0006431">
    <property type="term" value="P:methionyl-tRNA aminoacylation"/>
    <property type="evidence" value="ECO:0000315"/>
    <property type="project" value="SGD"/>
</dbReference>
<dbReference type="CDD" id="cd00814">
    <property type="entry name" value="MetRS_core"/>
    <property type="match status" value="1"/>
</dbReference>
<dbReference type="FunFam" id="2.170.220.10:FF:000002">
    <property type="entry name" value="Methionine--tRNA ligase"/>
    <property type="match status" value="1"/>
</dbReference>
<dbReference type="FunFam" id="1.10.730.10:FF:000063">
    <property type="entry name" value="Mitochondrial methionyl-tRNA synthetase"/>
    <property type="match status" value="1"/>
</dbReference>
<dbReference type="Gene3D" id="2.170.220.10">
    <property type="match status" value="1"/>
</dbReference>
<dbReference type="Gene3D" id="3.40.50.620">
    <property type="entry name" value="HUPs"/>
    <property type="match status" value="1"/>
</dbReference>
<dbReference type="Gene3D" id="1.10.730.10">
    <property type="entry name" value="Isoleucyl-tRNA Synthetase, Domain 1"/>
    <property type="match status" value="1"/>
</dbReference>
<dbReference type="InterPro" id="IPR001412">
    <property type="entry name" value="aa-tRNA-synth_I_CS"/>
</dbReference>
<dbReference type="InterPro" id="IPR014758">
    <property type="entry name" value="Met-tRNA_synth"/>
</dbReference>
<dbReference type="InterPro" id="IPR023457">
    <property type="entry name" value="Met-tRNA_synth_2"/>
</dbReference>
<dbReference type="InterPro" id="IPR015413">
    <property type="entry name" value="Methionyl/Leucyl_tRNA_Synth"/>
</dbReference>
<dbReference type="InterPro" id="IPR033911">
    <property type="entry name" value="MetRS_core"/>
</dbReference>
<dbReference type="InterPro" id="IPR014729">
    <property type="entry name" value="Rossmann-like_a/b/a_fold"/>
</dbReference>
<dbReference type="InterPro" id="IPR009080">
    <property type="entry name" value="tRNAsynth_Ia_anticodon-bd"/>
</dbReference>
<dbReference type="NCBIfam" id="TIGR00398">
    <property type="entry name" value="metG"/>
    <property type="match status" value="1"/>
</dbReference>
<dbReference type="PANTHER" id="PTHR43326:SF1">
    <property type="entry name" value="METHIONINE--TRNA LIGASE, MITOCHONDRIAL"/>
    <property type="match status" value="1"/>
</dbReference>
<dbReference type="PANTHER" id="PTHR43326">
    <property type="entry name" value="METHIONYL-TRNA SYNTHETASE"/>
    <property type="match status" value="1"/>
</dbReference>
<dbReference type="Pfam" id="PF09334">
    <property type="entry name" value="tRNA-synt_1g"/>
    <property type="match status" value="1"/>
</dbReference>
<dbReference type="PRINTS" id="PR01041">
    <property type="entry name" value="TRNASYNTHMET"/>
</dbReference>
<dbReference type="SUPFAM" id="SSF47323">
    <property type="entry name" value="Anticodon-binding domain of a subclass of class I aminoacyl-tRNA synthetases"/>
    <property type="match status" value="1"/>
</dbReference>
<dbReference type="SUPFAM" id="SSF52374">
    <property type="entry name" value="Nucleotidylyl transferase"/>
    <property type="match status" value="1"/>
</dbReference>
<dbReference type="PROSITE" id="PS00178">
    <property type="entry name" value="AA_TRNA_LIGASE_I"/>
    <property type="match status" value="1"/>
</dbReference>
<evidence type="ECO:0000250" key="1"/>
<evidence type="ECO:0000269" key="2">
    <source>
    </source>
</evidence>
<evidence type="ECO:0000269" key="3">
    <source>
    </source>
</evidence>
<evidence type="ECO:0000305" key="4"/>
<evidence type="ECO:0000305" key="5">
    <source>
    </source>
</evidence>
<gene>
    <name type="primary">MSM1</name>
    <name type="ordered locus">YGR171C</name>
</gene>
<feature type="chain" id="PRO_0000139272" description="Methionine--tRNA ligase, mitochondrial">
    <location>
        <begin position="1"/>
        <end position="575"/>
    </location>
</feature>
<feature type="short sequence motif" description="'HIGH' region">
    <location>
        <begin position="20"/>
        <end position="32"/>
    </location>
</feature>
<feature type="short sequence motif" description="'KMSKS' region">
    <location>
        <begin position="341"/>
        <end position="345"/>
    </location>
</feature>
<feature type="binding site" evidence="1">
    <location>
        <position position="344"/>
    </location>
    <ligand>
        <name>ATP</name>
        <dbReference type="ChEBI" id="CHEBI:30616"/>
    </ligand>
</feature>
<feature type="sequence conflict" description="In Ref. 1; CAA32778." evidence="4" ref="1">
    <original>V</original>
    <variation>I</variation>
    <location>
        <position position="14"/>
    </location>
</feature>
<comment type="function">
    <text evidence="3">Catalyzes the attachment of methionine to tRNA(Met) in the mitochondrion.</text>
</comment>
<comment type="catalytic activity">
    <reaction evidence="5">
        <text>tRNA(Met) + L-methionine + ATP = L-methionyl-tRNA(Met) + AMP + diphosphate</text>
        <dbReference type="Rhea" id="RHEA:13481"/>
        <dbReference type="Rhea" id="RHEA-COMP:9667"/>
        <dbReference type="Rhea" id="RHEA-COMP:9698"/>
        <dbReference type="ChEBI" id="CHEBI:30616"/>
        <dbReference type="ChEBI" id="CHEBI:33019"/>
        <dbReference type="ChEBI" id="CHEBI:57844"/>
        <dbReference type="ChEBI" id="CHEBI:78442"/>
        <dbReference type="ChEBI" id="CHEBI:78530"/>
        <dbReference type="ChEBI" id="CHEBI:456215"/>
        <dbReference type="EC" id="6.1.1.10"/>
    </reaction>
    <physiologicalReaction direction="left-to-right" evidence="5">
        <dbReference type="Rhea" id="RHEA:13482"/>
    </physiologicalReaction>
</comment>
<comment type="subcellular location">
    <subcellularLocation>
        <location evidence="3">Mitochondrion matrix</location>
    </subcellularLocation>
</comment>
<comment type="miscellaneous">
    <text evidence="2">Present with 3120 molecules/cell in log phase SD medium.</text>
</comment>
<comment type="similarity">
    <text evidence="4">Belongs to the class-I aminoacyl-tRNA synthetase family.</text>
</comment>
<proteinExistence type="evidence at protein level"/>
<organism>
    <name type="scientific">Saccharomyces cerevisiae (strain ATCC 204508 / S288c)</name>
    <name type="common">Baker's yeast</name>
    <dbReference type="NCBI Taxonomy" id="559292"/>
    <lineage>
        <taxon>Eukaryota</taxon>
        <taxon>Fungi</taxon>
        <taxon>Dikarya</taxon>
        <taxon>Ascomycota</taxon>
        <taxon>Saccharomycotina</taxon>
        <taxon>Saccharomycetes</taxon>
        <taxon>Saccharomycetales</taxon>
        <taxon>Saccharomycetaceae</taxon>
        <taxon>Saccharomyces</taxon>
    </lineage>
</organism>
<accession>P22438</accession>
<accession>D6VUV5</accession>
<name>SYMM_YEAST</name>
<protein>
    <recommendedName>
        <fullName>Methionine--tRNA ligase, mitochondrial</fullName>
        <ecNumber evidence="5">6.1.1.10</ecNumber>
    </recommendedName>
    <alternativeName>
        <fullName>Methionyl-tRNA synthetase</fullName>
        <shortName>MetRS</shortName>
    </alternativeName>
</protein>
<reference key="1">
    <citation type="journal article" date="1989" name="Eur. J. Biochem.">
        <title>Characterization of MSM1, the structural gene for yeast mitochondrial methionyl-tRNA synthetase.</title>
        <authorList>
            <person name="Tzagoloff A."/>
            <person name="Vambutas A."/>
            <person name="Akai A."/>
        </authorList>
    </citation>
    <scope>NUCLEOTIDE SEQUENCE [GENOMIC DNA]</scope>
    <scope>FUNCTION</scope>
    <scope>CATALYTIC ACTIVITY</scope>
    <source>
        <strain>D273-10B/A1</strain>
    </source>
</reference>
<reference key="2">
    <citation type="journal article" date="1997" name="Nature">
        <title>The nucleotide sequence of Saccharomyces cerevisiae chromosome VII.</title>
        <authorList>
            <person name="Tettelin H."/>
            <person name="Agostoni-Carbone M.L."/>
            <person name="Albermann K."/>
            <person name="Albers M."/>
            <person name="Arroyo J."/>
            <person name="Backes U."/>
            <person name="Barreiros T."/>
            <person name="Bertani I."/>
            <person name="Bjourson A.J."/>
            <person name="Brueckner M."/>
            <person name="Bruschi C.V."/>
            <person name="Carignani G."/>
            <person name="Castagnoli L."/>
            <person name="Cerdan E."/>
            <person name="Clemente M.L."/>
            <person name="Coblenz A."/>
            <person name="Coglievina M."/>
            <person name="Coissac E."/>
            <person name="Defoor E."/>
            <person name="Del Bino S."/>
            <person name="Delius H."/>
            <person name="Delneri D."/>
            <person name="de Wergifosse P."/>
            <person name="Dujon B."/>
            <person name="Durand P."/>
            <person name="Entian K.-D."/>
            <person name="Eraso P."/>
            <person name="Escribano V."/>
            <person name="Fabiani L."/>
            <person name="Fartmann B."/>
            <person name="Feroli F."/>
            <person name="Feuermann M."/>
            <person name="Frontali L."/>
            <person name="Garcia-Gonzalez M."/>
            <person name="Garcia-Saez M.I."/>
            <person name="Goffeau A."/>
            <person name="Guerreiro P."/>
            <person name="Hani J."/>
            <person name="Hansen M."/>
            <person name="Hebling U."/>
            <person name="Hernandez K."/>
            <person name="Heumann K."/>
            <person name="Hilger F."/>
            <person name="Hofmann B."/>
            <person name="Indge K.J."/>
            <person name="James C.M."/>
            <person name="Klima R."/>
            <person name="Koetter P."/>
            <person name="Kramer B."/>
            <person name="Kramer W."/>
            <person name="Lauquin G."/>
            <person name="Leuther H."/>
            <person name="Louis E.J."/>
            <person name="Maillier E."/>
            <person name="Marconi A."/>
            <person name="Martegani E."/>
            <person name="Mazon M.J."/>
            <person name="Mazzoni C."/>
            <person name="McReynolds A.D.K."/>
            <person name="Melchioretto P."/>
            <person name="Mewes H.-W."/>
            <person name="Minenkova O."/>
            <person name="Mueller-Auer S."/>
            <person name="Nawrocki A."/>
            <person name="Netter P."/>
            <person name="Neu R."/>
            <person name="Nombela C."/>
            <person name="Oliver S.G."/>
            <person name="Panzeri L."/>
            <person name="Paoluzi S."/>
            <person name="Plevani P."/>
            <person name="Portetelle D."/>
            <person name="Portillo F."/>
            <person name="Potier S."/>
            <person name="Purnelle B."/>
            <person name="Rieger M."/>
            <person name="Riles L."/>
            <person name="Rinaldi T."/>
            <person name="Robben J."/>
            <person name="Rodrigues-Pousada C."/>
            <person name="Rodriguez-Belmonte E."/>
            <person name="Rodriguez-Torres A.M."/>
            <person name="Rose M."/>
            <person name="Ruzzi M."/>
            <person name="Saliola M."/>
            <person name="Sanchez-Perez M."/>
            <person name="Schaefer B."/>
            <person name="Schaefer M."/>
            <person name="Scharfe M."/>
            <person name="Schmidheini T."/>
            <person name="Schreer A."/>
            <person name="Skala J."/>
            <person name="Souciet J.-L."/>
            <person name="Steensma H.Y."/>
            <person name="Talla E."/>
            <person name="Thierry A."/>
            <person name="Vandenbol M."/>
            <person name="van der Aart Q.J.M."/>
            <person name="Van Dyck L."/>
            <person name="Vanoni M."/>
            <person name="Verhasselt P."/>
            <person name="Voet M."/>
            <person name="Volckaert G."/>
            <person name="Wambutt R."/>
            <person name="Watson M.D."/>
            <person name="Weber N."/>
            <person name="Wedler E."/>
            <person name="Wedler H."/>
            <person name="Wipfli P."/>
            <person name="Wolf K."/>
            <person name="Wright L.F."/>
            <person name="Zaccaria P."/>
            <person name="Zimmermann M."/>
            <person name="Zollner A."/>
            <person name="Kleine K."/>
        </authorList>
    </citation>
    <scope>NUCLEOTIDE SEQUENCE [LARGE SCALE GENOMIC DNA]</scope>
    <source>
        <strain>ATCC 204508 / S288c</strain>
    </source>
</reference>
<reference key="3">
    <citation type="journal article" date="2014" name="G3 (Bethesda)">
        <title>The reference genome sequence of Saccharomyces cerevisiae: Then and now.</title>
        <authorList>
            <person name="Engel S.R."/>
            <person name="Dietrich F.S."/>
            <person name="Fisk D.G."/>
            <person name="Binkley G."/>
            <person name="Balakrishnan R."/>
            <person name="Costanzo M.C."/>
            <person name="Dwight S.S."/>
            <person name="Hitz B.C."/>
            <person name="Karra K."/>
            <person name="Nash R.S."/>
            <person name="Weng S."/>
            <person name="Wong E.D."/>
            <person name="Lloyd P."/>
            <person name="Skrzypek M.S."/>
            <person name="Miyasato S.R."/>
            <person name="Simison M."/>
            <person name="Cherry J.M."/>
        </authorList>
    </citation>
    <scope>GENOME REANNOTATION</scope>
    <source>
        <strain>ATCC 204508 / S288c</strain>
    </source>
</reference>
<reference key="4">
    <citation type="journal article" date="2003" name="Nature">
        <title>Global analysis of protein expression in yeast.</title>
        <authorList>
            <person name="Ghaemmaghami S."/>
            <person name="Huh W.-K."/>
            <person name="Bower K."/>
            <person name="Howson R.W."/>
            <person name="Belle A."/>
            <person name="Dephoure N."/>
            <person name="O'Shea E.K."/>
            <person name="Weissman J.S."/>
        </authorList>
    </citation>
    <scope>LEVEL OF PROTEIN EXPRESSION [LARGE SCALE ANALYSIS]</scope>
</reference>
<keyword id="KW-0030">Aminoacyl-tRNA synthetase</keyword>
<keyword id="KW-0067">ATP-binding</keyword>
<keyword id="KW-0436">Ligase</keyword>
<keyword id="KW-0496">Mitochondrion</keyword>
<keyword id="KW-0547">Nucleotide-binding</keyword>
<keyword id="KW-0648">Protein biosynthesis</keyword>
<keyword id="KW-1185">Reference proteome</keyword>